<dbReference type="EMBL" id="BC044074">
    <property type="protein sequence ID" value="AAH44074.1"/>
    <property type="molecule type" value="mRNA"/>
</dbReference>
<dbReference type="RefSeq" id="NP_001080358.1">
    <property type="nucleotide sequence ID" value="NM_001086889.1"/>
</dbReference>
<dbReference type="SMR" id="Q7ZXX9"/>
<dbReference type="DNASU" id="380050"/>
<dbReference type="GeneID" id="380050"/>
<dbReference type="KEGG" id="xla:380050"/>
<dbReference type="AGR" id="Xenbase:XB-GENE-6254226"/>
<dbReference type="CTD" id="380050"/>
<dbReference type="Xenbase" id="XB-GENE-6254226">
    <property type="gene designation" value="bop1.L"/>
</dbReference>
<dbReference type="OrthoDB" id="5571054at2759"/>
<dbReference type="Proteomes" id="UP000186698">
    <property type="component" value="Chromosome 6L"/>
</dbReference>
<dbReference type="Bgee" id="380050">
    <property type="expression patterns" value="Expressed in oocyte and 19 other cell types or tissues"/>
</dbReference>
<dbReference type="GO" id="GO:0005654">
    <property type="term" value="C:nucleoplasm"/>
    <property type="evidence" value="ECO:0007669"/>
    <property type="project" value="UniProtKB-SubCell"/>
</dbReference>
<dbReference type="GO" id="GO:0070545">
    <property type="term" value="C:PeBoW complex"/>
    <property type="evidence" value="ECO:0000250"/>
    <property type="project" value="UniProtKB"/>
</dbReference>
<dbReference type="GO" id="GO:0030687">
    <property type="term" value="C:preribosome, large subunit precursor"/>
    <property type="evidence" value="ECO:0000318"/>
    <property type="project" value="GO_Central"/>
</dbReference>
<dbReference type="GO" id="GO:0043021">
    <property type="term" value="F:ribonucleoprotein complex binding"/>
    <property type="evidence" value="ECO:0000318"/>
    <property type="project" value="GO_Central"/>
</dbReference>
<dbReference type="GO" id="GO:0000466">
    <property type="term" value="P:maturation of 5.8S rRNA from tricistronic rRNA transcript (SSU-rRNA, 5.8S rRNA, LSU-rRNA)"/>
    <property type="evidence" value="ECO:0007669"/>
    <property type="project" value="UniProtKB-UniRule"/>
</dbReference>
<dbReference type="GO" id="GO:0000463">
    <property type="term" value="P:maturation of LSU-rRNA from tricistronic rRNA transcript (SSU-rRNA, 5.8S rRNA, LSU-rRNA)"/>
    <property type="evidence" value="ECO:0000250"/>
    <property type="project" value="UniProtKB"/>
</dbReference>
<dbReference type="GO" id="GO:0051726">
    <property type="term" value="P:regulation of cell cycle"/>
    <property type="evidence" value="ECO:0000250"/>
    <property type="project" value="UniProtKB"/>
</dbReference>
<dbReference type="FunFam" id="2.130.10.10:FF:000061">
    <property type="entry name" value="Ribosome biogenesis protein BOP1 homolog"/>
    <property type="match status" value="1"/>
</dbReference>
<dbReference type="Gene3D" id="2.130.10.10">
    <property type="entry name" value="YVTN repeat-like/Quinoprotein amine dehydrogenase"/>
    <property type="match status" value="1"/>
</dbReference>
<dbReference type="HAMAP" id="MF_03027">
    <property type="entry name" value="BOP1"/>
    <property type="match status" value="1"/>
</dbReference>
<dbReference type="InterPro" id="IPR028598">
    <property type="entry name" value="BOP1/Erb1"/>
</dbReference>
<dbReference type="InterPro" id="IPR012953">
    <property type="entry name" value="BOP1_N_dom"/>
</dbReference>
<dbReference type="InterPro" id="IPR015943">
    <property type="entry name" value="WD40/YVTN_repeat-like_dom_sf"/>
</dbReference>
<dbReference type="InterPro" id="IPR019775">
    <property type="entry name" value="WD40_repeat_CS"/>
</dbReference>
<dbReference type="InterPro" id="IPR036322">
    <property type="entry name" value="WD40_repeat_dom_sf"/>
</dbReference>
<dbReference type="InterPro" id="IPR001680">
    <property type="entry name" value="WD40_rpt"/>
</dbReference>
<dbReference type="PANTHER" id="PTHR17605:SF0">
    <property type="entry name" value="RIBOSOME BIOGENESIS PROTEIN BOP1"/>
    <property type="match status" value="1"/>
</dbReference>
<dbReference type="PANTHER" id="PTHR17605">
    <property type="entry name" value="RIBOSOME BIOGENESIS PROTEIN BOP1 BLOCK OF PROLIFERATION 1 PROTEIN"/>
    <property type="match status" value="1"/>
</dbReference>
<dbReference type="Pfam" id="PF08145">
    <property type="entry name" value="BOP1NT"/>
    <property type="match status" value="1"/>
</dbReference>
<dbReference type="Pfam" id="PF00400">
    <property type="entry name" value="WD40"/>
    <property type="match status" value="4"/>
</dbReference>
<dbReference type="SMART" id="SM01035">
    <property type="entry name" value="BOP1NT"/>
    <property type="match status" value="1"/>
</dbReference>
<dbReference type="SMART" id="SM00320">
    <property type="entry name" value="WD40"/>
    <property type="match status" value="7"/>
</dbReference>
<dbReference type="SUPFAM" id="SSF50978">
    <property type="entry name" value="WD40 repeat-like"/>
    <property type="match status" value="1"/>
</dbReference>
<dbReference type="PROSITE" id="PS00678">
    <property type="entry name" value="WD_REPEATS_1"/>
    <property type="match status" value="1"/>
</dbReference>
<dbReference type="PROSITE" id="PS50082">
    <property type="entry name" value="WD_REPEATS_2"/>
    <property type="match status" value="1"/>
</dbReference>
<dbReference type="PROSITE" id="PS50294">
    <property type="entry name" value="WD_REPEATS_REGION"/>
    <property type="match status" value="2"/>
</dbReference>
<accession>Q7ZXX9</accession>
<organism>
    <name type="scientific">Xenopus laevis</name>
    <name type="common">African clawed frog</name>
    <dbReference type="NCBI Taxonomy" id="8355"/>
    <lineage>
        <taxon>Eukaryota</taxon>
        <taxon>Metazoa</taxon>
        <taxon>Chordata</taxon>
        <taxon>Craniata</taxon>
        <taxon>Vertebrata</taxon>
        <taxon>Euteleostomi</taxon>
        <taxon>Amphibia</taxon>
        <taxon>Batrachia</taxon>
        <taxon>Anura</taxon>
        <taxon>Pipoidea</taxon>
        <taxon>Pipidae</taxon>
        <taxon>Xenopodinae</taxon>
        <taxon>Xenopus</taxon>
        <taxon>Xenopus</taxon>
    </lineage>
</organism>
<reference key="1">
    <citation type="submission" date="2003-01" db="EMBL/GenBank/DDBJ databases">
        <authorList>
            <consortium name="NIH - Xenopus Gene Collection (XGC) project"/>
        </authorList>
    </citation>
    <scope>NUCLEOTIDE SEQUENCE [LARGE SCALE MRNA]</scope>
    <source>
        <tissue>Embryo</tissue>
    </source>
</reference>
<keyword id="KW-0539">Nucleus</keyword>
<keyword id="KW-1185">Reference proteome</keyword>
<keyword id="KW-0677">Repeat</keyword>
<keyword id="KW-0690">Ribosome biogenesis</keyword>
<keyword id="KW-0698">rRNA processing</keyword>
<keyword id="KW-0853">WD repeat</keyword>
<gene>
    <name type="primary">bop1-b</name>
</gene>
<proteinExistence type="evidence at transcript level"/>
<name>BOP1B_XENLA</name>
<comment type="function">
    <text evidence="1">Component of the PeBoW complex, which is required for maturation of 28S and 5.8S ribosomal RNAs and formation of the 60S ribosome.</text>
</comment>
<comment type="subunit">
    <text evidence="1">Component of the PeBoW complex, composed of bop1, pes1 and wdr12. The complex is held together by bop1, which interacts with pes1 via its N-terminal domain and with wdr12 via a high-affinity interaction between the seven-bladed beta-propeller domains of the 2 proteins. The PeBoW complex associates with the 66S pre-ribosome.</text>
</comment>
<comment type="subcellular location">
    <subcellularLocation>
        <location evidence="1">Nucleus</location>
        <location evidence="1">Nucleolus</location>
    </subcellularLocation>
    <subcellularLocation>
        <location evidence="1">Nucleus</location>
        <location evidence="1">Nucleoplasm</location>
    </subcellularLocation>
</comment>
<comment type="similarity">
    <text evidence="1">Belongs to the WD repeat BOP1/ERB1 family.</text>
</comment>
<sequence>MKRGSKRESGGPLTEEPEPLFSEENRSLQDGNPLDESDSEESQYSGLEDSGTDSSDDEEDHSSEEVQDPGKSPKEIIKVPHRTSKSQADSPADEEDQPNEIKEYENDSSDEEDIRNTVGNIPMEWYKDLPHIGYDLDGRKIFKPLRSKDQLEEFLDKMENPDYWRTVHDKKTGQDIKLTDEQVDLVERLQKGQFGDLNYDPYQPAIDFFTHETMIHPVTNRPADKRSFIPSLIEKEKVSKLVHAIKMGWIQPRKPRDDAPTYYDLWAKEDPNAILGRHKMHVPAPKLPLPGHEQSYNPPPEYLMSEEERLAWEQQDPEDRKLPFLPQRFNCLRAVPGYARFIHERFERCLDLYLCPRQRKMRVNVDPEDLIPKLPKPRDLQPFPTIQSMIYKGHKDLVRCISVSPSGQWLVSGSDDCSVRFWEVSTGRCMKSVVLEGAVKSISWNPNPVLVLVAACVDRSVVLINPGLGDRLLCSATDQHISGYQPPEEEVQQPVTWEEAEGSEYSSGLRLWIKHQKEVKQVTFHARGDYFAVVLPDNGNSQVLIHQLSRRRSQNPFRKNKGQVQKVLFHPTRPFFFVATQRYVRVYNLLKQELTKKLLTNCKWVSSIAVHPAGDNLICGSYDSKLAWFDMDLSTKPYKVLRHHKKALRAVSFHKSYPLFASGSDDASVIVCHGMVYNDLLQNPLIVPVKVLRGHAIHRDLGVLDVMFHPTQPWVFSSGADGTIRLFT</sequence>
<feature type="chain" id="PRO_0000370389" description="Ribosome biogenesis protein bop1-B">
    <location>
        <begin position="1"/>
        <end position="728"/>
    </location>
</feature>
<feature type="repeat" description="WD 1">
    <location>
        <begin position="393"/>
        <end position="432"/>
    </location>
</feature>
<feature type="repeat" description="WD 2">
    <location>
        <begin position="434"/>
        <end position="474"/>
    </location>
</feature>
<feature type="repeat" description="WD 3">
    <location>
        <begin position="514"/>
        <end position="556"/>
    </location>
</feature>
<feature type="repeat" description="WD 4">
    <location>
        <begin position="559"/>
        <end position="597"/>
    </location>
</feature>
<feature type="repeat" description="WD 5">
    <location>
        <begin position="600"/>
        <end position="639"/>
    </location>
</feature>
<feature type="repeat" description="WD 6">
    <location>
        <begin position="643"/>
        <end position="682"/>
    </location>
</feature>
<feature type="repeat" description="WD 7">
    <location>
        <begin position="698"/>
        <end position="728"/>
    </location>
</feature>
<feature type="region of interest" description="Disordered" evidence="2">
    <location>
        <begin position="1"/>
        <end position="114"/>
    </location>
</feature>
<feature type="compositionally biased region" description="Acidic residues" evidence="2">
    <location>
        <begin position="50"/>
        <end position="67"/>
    </location>
</feature>
<protein>
    <recommendedName>
        <fullName evidence="1">Ribosome biogenesis protein bop1-B</fullName>
    </recommendedName>
    <alternativeName>
        <fullName evidence="1">Block of proliferation 1 protein B</fullName>
    </alternativeName>
</protein>
<evidence type="ECO:0000255" key="1">
    <source>
        <dbReference type="HAMAP-Rule" id="MF_03027"/>
    </source>
</evidence>
<evidence type="ECO:0000256" key="2">
    <source>
        <dbReference type="SAM" id="MobiDB-lite"/>
    </source>
</evidence>